<comment type="function">
    <text evidence="1">Catalyzes the formation of phosphatidylethanolamine (PtdEtn) from phosphatidylserine (PtdSer).</text>
</comment>
<comment type="catalytic activity">
    <reaction evidence="1">
        <text>a 1,2-diacyl-sn-glycero-3-phospho-L-serine + H(+) = a 1,2-diacyl-sn-glycero-3-phosphoethanolamine + CO2</text>
        <dbReference type="Rhea" id="RHEA:20828"/>
        <dbReference type="ChEBI" id="CHEBI:15378"/>
        <dbReference type="ChEBI" id="CHEBI:16526"/>
        <dbReference type="ChEBI" id="CHEBI:57262"/>
        <dbReference type="ChEBI" id="CHEBI:64612"/>
        <dbReference type="EC" id="4.1.1.65"/>
    </reaction>
</comment>
<comment type="cofactor">
    <cofactor evidence="1">
        <name>pyruvate</name>
        <dbReference type="ChEBI" id="CHEBI:15361"/>
    </cofactor>
    <text evidence="1">Binds 1 pyruvoyl group covalently per subunit.</text>
</comment>
<comment type="pathway">
    <text evidence="1">Phospholipid metabolism; phosphatidylethanolamine biosynthesis; phosphatidylethanolamine from CDP-diacylglycerol: step 2/2.</text>
</comment>
<comment type="subunit">
    <text evidence="1">Heterodimer of a large membrane-associated beta subunit and a small pyruvoyl-containing alpha subunit.</text>
</comment>
<comment type="subcellular location">
    <subcellularLocation>
        <location evidence="1">Cell membrane</location>
        <topology evidence="1">Peripheral membrane protein</topology>
    </subcellularLocation>
</comment>
<comment type="PTM">
    <text evidence="1">Is synthesized initially as an inactive proenzyme. Formation of the active enzyme involves a self-maturation process in which the active site pyruvoyl group is generated from an internal serine residue via an autocatalytic post-translational modification. Two non-identical subunits are generated from the proenzyme in this reaction, and the pyruvate is formed at the N-terminus of the alpha chain, which is derived from the carboxyl end of the proenzyme. The autoendoproteolytic cleavage occurs by a canonical serine protease mechanism, in which the side chain hydroxyl group of the serine supplies its oxygen atom to form the C-terminus of the beta chain, while the remainder of the serine residue undergoes an oxidative deamination to produce ammonia and the pyruvoyl prosthetic group on the alpha chain. During this reaction, the Ser that is part of the protease active site of the proenzyme becomes the pyruvoyl prosthetic group, which constitutes an essential element of the active site of the mature decarboxylase.</text>
</comment>
<comment type="similarity">
    <text evidence="1">Belongs to the phosphatidylserine decarboxylase family. PSD-B subfamily. Prokaryotic type I sub-subfamily.</text>
</comment>
<reference key="1">
    <citation type="submission" date="2007-11" db="EMBL/GenBank/DDBJ databases">
        <authorList>
            <consortium name="The Salmonella enterica serovar Paratyphi B Genome Sequencing Project"/>
            <person name="McClelland M."/>
            <person name="Sanderson E.K."/>
            <person name="Porwollik S."/>
            <person name="Spieth J."/>
            <person name="Clifton W.S."/>
            <person name="Fulton R."/>
            <person name="Cordes M."/>
            <person name="Wollam A."/>
            <person name="Shah N."/>
            <person name="Pepin K."/>
            <person name="Bhonagiri V."/>
            <person name="Nash W."/>
            <person name="Johnson M."/>
            <person name="Thiruvilangam P."/>
            <person name="Wilson R."/>
        </authorList>
    </citation>
    <scope>NUCLEOTIDE SEQUENCE [LARGE SCALE GENOMIC DNA]</scope>
    <source>
        <strain>ATCC BAA-1250 / SPB7</strain>
    </source>
</reference>
<gene>
    <name evidence="1" type="primary">psd</name>
    <name type="ordered locus">SPAB_05481</name>
</gene>
<protein>
    <recommendedName>
        <fullName evidence="1">Phosphatidylserine decarboxylase proenzyme</fullName>
        <ecNumber evidence="1">4.1.1.65</ecNumber>
    </recommendedName>
    <component>
        <recommendedName>
            <fullName evidence="1">Phosphatidylserine decarboxylase alpha chain</fullName>
        </recommendedName>
    </component>
    <component>
        <recommendedName>
            <fullName evidence="1">Phosphatidylserine decarboxylase beta chain</fullName>
        </recommendedName>
    </component>
</protein>
<keyword id="KW-1003">Cell membrane</keyword>
<keyword id="KW-0210">Decarboxylase</keyword>
<keyword id="KW-0444">Lipid biosynthesis</keyword>
<keyword id="KW-0443">Lipid metabolism</keyword>
<keyword id="KW-0456">Lyase</keyword>
<keyword id="KW-0472">Membrane</keyword>
<keyword id="KW-0594">Phospholipid biosynthesis</keyword>
<keyword id="KW-1208">Phospholipid metabolism</keyword>
<keyword id="KW-0670">Pyruvate</keyword>
<keyword id="KW-0865">Zymogen</keyword>
<organism>
    <name type="scientific">Salmonella paratyphi B (strain ATCC BAA-1250 / SPB7)</name>
    <dbReference type="NCBI Taxonomy" id="1016998"/>
    <lineage>
        <taxon>Bacteria</taxon>
        <taxon>Pseudomonadati</taxon>
        <taxon>Pseudomonadota</taxon>
        <taxon>Gammaproteobacteria</taxon>
        <taxon>Enterobacterales</taxon>
        <taxon>Enterobacteriaceae</taxon>
        <taxon>Salmonella</taxon>
    </lineage>
</organism>
<dbReference type="EC" id="4.1.1.65" evidence="1"/>
<dbReference type="EMBL" id="CP000886">
    <property type="protein sequence ID" value="ABX70753.1"/>
    <property type="molecule type" value="Genomic_DNA"/>
</dbReference>
<dbReference type="SMR" id="A9N419"/>
<dbReference type="KEGG" id="spq:SPAB_05481"/>
<dbReference type="PATRIC" id="fig|1016998.12.peg.5138"/>
<dbReference type="HOGENOM" id="CLU_029061_4_1_6"/>
<dbReference type="BioCyc" id="SENT1016998:SPAB_RS22350-MONOMER"/>
<dbReference type="UniPathway" id="UPA00558">
    <property type="reaction ID" value="UER00616"/>
</dbReference>
<dbReference type="Proteomes" id="UP000008556">
    <property type="component" value="Chromosome"/>
</dbReference>
<dbReference type="GO" id="GO:0005886">
    <property type="term" value="C:plasma membrane"/>
    <property type="evidence" value="ECO:0007669"/>
    <property type="project" value="UniProtKB-SubCell"/>
</dbReference>
<dbReference type="GO" id="GO:0004609">
    <property type="term" value="F:phosphatidylserine decarboxylase activity"/>
    <property type="evidence" value="ECO:0007669"/>
    <property type="project" value="UniProtKB-UniRule"/>
</dbReference>
<dbReference type="GO" id="GO:0006646">
    <property type="term" value="P:phosphatidylethanolamine biosynthetic process"/>
    <property type="evidence" value="ECO:0007669"/>
    <property type="project" value="UniProtKB-UniRule"/>
</dbReference>
<dbReference type="HAMAP" id="MF_00662">
    <property type="entry name" value="PS_decarb_PSD_B_type1"/>
    <property type="match status" value="1"/>
</dbReference>
<dbReference type="InterPro" id="IPR003817">
    <property type="entry name" value="PS_Dcarbxylase"/>
</dbReference>
<dbReference type="InterPro" id="IPR033177">
    <property type="entry name" value="PSD-B"/>
</dbReference>
<dbReference type="InterPro" id="IPR033178">
    <property type="entry name" value="PSD_type1_pro"/>
</dbReference>
<dbReference type="NCBIfam" id="TIGR00163">
    <property type="entry name" value="PS_decarb"/>
    <property type="match status" value="1"/>
</dbReference>
<dbReference type="PANTHER" id="PTHR10067">
    <property type="entry name" value="PHOSPHATIDYLSERINE DECARBOXYLASE"/>
    <property type="match status" value="1"/>
</dbReference>
<dbReference type="PANTHER" id="PTHR10067:SF6">
    <property type="entry name" value="PHOSPHATIDYLSERINE DECARBOXYLASE PROENZYME, MITOCHONDRIAL"/>
    <property type="match status" value="1"/>
</dbReference>
<dbReference type="Pfam" id="PF02666">
    <property type="entry name" value="PS_Dcarbxylase"/>
    <property type="match status" value="1"/>
</dbReference>
<name>PSD_SALPB</name>
<sequence>MLNSFKLSLQYILPKLWLTRLAGWGASKRAGWLTKLVIDLFVKYYKVDMTEAQKPDTASYRTFNDFFVRPLRDDVRPLNTDPNILVMPADGVISQLGRIEEDKILQAKGHNYSLEALLAGNYLMADKFRNGTFVTTYLSPRDYHRVHMPCNGILREMIYVPGDLFSVNHLTAQNVPNLFARNERVICLFDTEFGPMAQILVGATIVGSIETVWAGTITPPREGIIKRWTWPEGEHEGSVALLKGQEMGRFKLGSTVINLFAPGKVNLIASLASLSVTKIGQPLATSTETFVAPEVEPAPLPAEEIKAEHDASPLVDNKKDDT</sequence>
<proteinExistence type="inferred from homology"/>
<feature type="chain" id="PRO_1000082900" description="Phosphatidylserine decarboxylase beta chain" evidence="1">
    <location>
        <begin position="1"/>
        <end position="253"/>
    </location>
</feature>
<feature type="chain" id="PRO_1000082901" description="Phosphatidylserine decarboxylase alpha chain" evidence="1">
    <location>
        <begin position="254"/>
        <end position="322"/>
    </location>
</feature>
<feature type="region of interest" description="Disordered" evidence="2">
    <location>
        <begin position="296"/>
        <end position="322"/>
    </location>
</feature>
<feature type="compositionally biased region" description="Basic and acidic residues" evidence="2">
    <location>
        <begin position="303"/>
        <end position="322"/>
    </location>
</feature>
<feature type="active site" description="Charge relay system; for autoendoproteolytic cleavage activity" evidence="1">
    <location>
        <position position="90"/>
    </location>
</feature>
<feature type="active site" description="Charge relay system; for autoendoproteolytic cleavage activity" evidence="1">
    <location>
        <position position="147"/>
    </location>
</feature>
<feature type="active site" description="Charge relay system; for autoendoproteolytic cleavage activity" evidence="1">
    <location>
        <position position="254"/>
    </location>
</feature>
<feature type="active site" description="Schiff-base intermediate with substrate; via pyruvic acid; for decarboxylase activity" evidence="1">
    <location>
        <position position="254"/>
    </location>
</feature>
<feature type="site" description="Cleavage (non-hydrolytic); by autocatalysis" evidence="1">
    <location>
        <begin position="253"/>
        <end position="254"/>
    </location>
</feature>
<feature type="modified residue" description="Pyruvic acid (Ser); by autocatalysis" evidence="1">
    <location>
        <position position="254"/>
    </location>
</feature>
<evidence type="ECO:0000255" key="1">
    <source>
        <dbReference type="HAMAP-Rule" id="MF_00662"/>
    </source>
</evidence>
<evidence type="ECO:0000256" key="2">
    <source>
        <dbReference type="SAM" id="MobiDB-lite"/>
    </source>
</evidence>
<accession>A9N419</accession>